<organism>
    <name type="scientific">Yersinia enterocolitica serotype O:8 / biotype 1B (strain NCTC 13174 / 8081)</name>
    <dbReference type="NCBI Taxonomy" id="393305"/>
    <lineage>
        <taxon>Bacteria</taxon>
        <taxon>Pseudomonadati</taxon>
        <taxon>Pseudomonadota</taxon>
        <taxon>Gammaproteobacteria</taxon>
        <taxon>Enterobacterales</taxon>
        <taxon>Yersiniaceae</taxon>
        <taxon>Yersinia</taxon>
    </lineage>
</organism>
<feature type="chain" id="PRO_1000067109" description="Glycogen debranching enzyme">
    <location>
        <begin position="1"/>
        <end position="662"/>
    </location>
</feature>
<feature type="active site" description="Nucleophile" evidence="1">
    <location>
        <position position="338"/>
    </location>
</feature>
<feature type="active site" description="Proton donor" evidence="1">
    <location>
        <position position="373"/>
    </location>
</feature>
<feature type="site" description="Transition state stabilizer" evidence="1">
    <location>
        <position position="445"/>
    </location>
</feature>
<reference key="1">
    <citation type="journal article" date="2006" name="PLoS Genet.">
        <title>The complete genome sequence and comparative genome analysis of the high pathogenicity Yersinia enterocolitica strain 8081.</title>
        <authorList>
            <person name="Thomson N.R."/>
            <person name="Howard S."/>
            <person name="Wren B.W."/>
            <person name="Holden M.T.G."/>
            <person name="Crossman L."/>
            <person name="Challis G.L."/>
            <person name="Churcher C."/>
            <person name="Mungall K."/>
            <person name="Brooks K."/>
            <person name="Chillingworth T."/>
            <person name="Feltwell T."/>
            <person name="Abdellah Z."/>
            <person name="Hauser H."/>
            <person name="Jagels K."/>
            <person name="Maddison M."/>
            <person name="Moule S."/>
            <person name="Sanders M."/>
            <person name="Whitehead S."/>
            <person name="Quail M.A."/>
            <person name="Dougan G."/>
            <person name="Parkhill J."/>
            <person name="Prentice M.B."/>
        </authorList>
    </citation>
    <scope>NUCLEOTIDE SEQUENCE [LARGE SCALE GENOMIC DNA]</scope>
    <source>
        <strain>NCTC 13174 / 8081</strain>
    </source>
</reference>
<gene>
    <name evidence="1" type="primary">glgX</name>
    <name type="ordered locus">YE4012</name>
</gene>
<protein>
    <recommendedName>
        <fullName evidence="1">Glycogen debranching enzyme</fullName>
        <ecNumber evidence="1">3.2.1.196</ecNumber>
    </recommendedName>
    <alternativeName>
        <fullName evidence="1">Limit dextrin alpha-1,6-maltotetraose-hydrolase</fullName>
    </alternativeName>
</protein>
<dbReference type="EC" id="3.2.1.196" evidence="1"/>
<dbReference type="EMBL" id="AM286415">
    <property type="protein sequence ID" value="CAL14030.1"/>
    <property type="molecule type" value="Genomic_DNA"/>
</dbReference>
<dbReference type="RefSeq" id="WP_005174773.1">
    <property type="nucleotide sequence ID" value="NC_008800.1"/>
</dbReference>
<dbReference type="RefSeq" id="YP_001008156.1">
    <property type="nucleotide sequence ID" value="NC_008800.1"/>
</dbReference>
<dbReference type="SMR" id="A1JSI8"/>
<dbReference type="CAZy" id="CBM48">
    <property type="family name" value="Carbohydrate-Binding Module Family 48"/>
</dbReference>
<dbReference type="CAZy" id="GH13">
    <property type="family name" value="Glycoside Hydrolase Family 13"/>
</dbReference>
<dbReference type="KEGG" id="yen:YE4012"/>
<dbReference type="PATRIC" id="fig|393305.7.peg.4271"/>
<dbReference type="eggNOG" id="COG1523">
    <property type="taxonomic scope" value="Bacteria"/>
</dbReference>
<dbReference type="HOGENOM" id="CLU_011725_1_1_6"/>
<dbReference type="OrthoDB" id="3236218at2"/>
<dbReference type="UniPathway" id="UPA00165"/>
<dbReference type="Proteomes" id="UP000000642">
    <property type="component" value="Chromosome"/>
</dbReference>
<dbReference type="GO" id="GO:0004133">
    <property type="term" value="F:glycogen debranching enzyme activity"/>
    <property type="evidence" value="ECO:0007669"/>
    <property type="project" value="UniProtKB-UniRule"/>
</dbReference>
<dbReference type="GO" id="GO:0004553">
    <property type="term" value="F:hydrolase activity, hydrolyzing O-glycosyl compounds"/>
    <property type="evidence" value="ECO:0007669"/>
    <property type="project" value="InterPro"/>
</dbReference>
<dbReference type="GO" id="GO:0005980">
    <property type="term" value="P:glycogen catabolic process"/>
    <property type="evidence" value="ECO:0007669"/>
    <property type="project" value="UniProtKB-UniRule"/>
</dbReference>
<dbReference type="CDD" id="cd11326">
    <property type="entry name" value="AmyAc_Glg_debranch"/>
    <property type="match status" value="1"/>
</dbReference>
<dbReference type="CDD" id="cd02856">
    <property type="entry name" value="E_set_GDE_Isoamylase_N"/>
    <property type="match status" value="1"/>
</dbReference>
<dbReference type="Gene3D" id="3.20.20.80">
    <property type="entry name" value="Glycosidases"/>
    <property type="match status" value="1"/>
</dbReference>
<dbReference type="Gene3D" id="2.60.40.1180">
    <property type="entry name" value="Golgi alpha-mannosidase II"/>
    <property type="match status" value="1"/>
</dbReference>
<dbReference type="Gene3D" id="2.60.40.10">
    <property type="entry name" value="Immunoglobulins"/>
    <property type="match status" value="1"/>
</dbReference>
<dbReference type="HAMAP" id="MF_01248">
    <property type="entry name" value="GlgX"/>
    <property type="match status" value="1"/>
</dbReference>
<dbReference type="InterPro" id="IPR040784">
    <property type="entry name" value="GlgX_C"/>
</dbReference>
<dbReference type="InterPro" id="IPR044505">
    <property type="entry name" value="GlgX_Isoamylase_N_E_set"/>
</dbReference>
<dbReference type="InterPro" id="IPR006047">
    <property type="entry name" value="Glyco_hydro_13_cat_dom"/>
</dbReference>
<dbReference type="InterPro" id="IPR004193">
    <property type="entry name" value="Glyco_hydro_13_N"/>
</dbReference>
<dbReference type="InterPro" id="IPR013780">
    <property type="entry name" value="Glyco_hydro_b"/>
</dbReference>
<dbReference type="InterPro" id="IPR022844">
    <property type="entry name" value="Glycogen_debranch_bac"/>
</dbReference>
<dbReference type="InterPro" id="IPR011837">
    <property type="entry name" value="Glycogen_debranch_GlgX"/>
</dbReference>
<dbReference type="InterPro" id="IPR017853">
    <property type="entry name" value="Glycoside_hydrolase_SF"/>
</dbReference>
<dbReference type="InterPro" id="IPR013783">
    <property type="entry name" value="Ig-like_fold"/>
</dbReference>
<dbReference type="InterPro" id="IPR014756">
    <property type="entry name" value="Ig_E-set"/>
</dbReference>
<dbReference type="NCBIfam" id="TIGR02100">
    <property type="entry name" value="glgX_debranch"/>
    <property type="match status" value="1"/>
</dbReference>
<dbReference type="NCBIfam" id="NF002983">
    <property type="entry name" value="PRK03705.1"/>
    <property type="match status" value="1"/>
</dbReference>
<dbReference type="PANTHER" id="PTHR43002">
    <property type="entry name" value="GLYCOGEN DEBRANCHING ENZYME"/>
    <property type="match status" value="1"/>
</dbReference>
<dbReference type="Pfam" id="PF00128">
    <property type="entry name" value="Alpha-amylase"/>
    <property type="match status" value="1"/>
</dbReference>
<dbReference type="Pfam" id="PF02922">
    <property type="entry name" value="CBM_48"/>
    <property type="match status" value="1"/>
</dbReference>
<dbReference type="Pfam" id="PF18390">
    <property type="entry name" value="GlgX_C"/>
    <property type="match status" value="1"/>
</dbReference>
<dbReference type="SMART" id="SM00642">
    <property type="entry name" value="Aamy"/>
    <property type="match status" value="1"/>
</dbReference>
<dbReference type="SUPFAM" id="SSF51445">
    <property type="entry name" value="(Trans)glycosidases"/>
    <property type="match status" value="1"/>
</dbReference>
<dbReference type="SUPFAM" id="SSF81296">
    <property type="entry name" value="E set domains"/>
    <property type="match status" value="1"/>
</dbReference>
<dbReference type="SUPFAM" id="SSF51011">
    <property type="entry name" value="Glycosyl hydrolase domain"/>
    <property type="match status" value="1"/>
</dbReference>
<comment type="function">
    <text evidence="1">Removes maltotriose and maltotetraose chains that are attached by 1,6-alpha-linkage to the limit dextrin main chain, generating a debranched limit dextrin.</text>
</comment>
<comment type="catalytic activity">
    <reaction evidence="1">
        <text>Hydrolysis of (1-&gt;6)-alpha-D-glucosidic linkages to branches with degrees of polymerization of three or four glucose residues in limit dextrin.</text>
        <dbReference type="EC" id="3.2.1.196"/>
    </reaction>
</comment>
<comment type="pathway">
    <text evidence="1">Glycan degradation; glycogen degradation.</text>
</comment>
<comment type="similarity">
    <text evidence="1">Belongs to the glycosyl hydrolase 13 family.</text>
</comment>
<proteinExistence type="inferred from homology"/>
<sequence length="662" mass="74267">MTTLTSGSPTPMGAHFDGVGINFTLFSAHAEQVELCLFDDNNQELRIPLPARSGDIWHGYLPGGKPGQRYGYRVSGPFNPQQGHRFNPHKLLIDPYARALDRKVGDDPSLQGGVSQPDYRDSAAVAPKCIVVHEEYDWQGDRRPTIPWGNTVIYEAHVRGLTQLHPDIPADLRGTYAGLAHPAMIQYLQKLGITTLELLPVQFHIDEPRLQKMGLSNYWGYNVLAPYAVDPDYASGREGISPLRELRDAVKALHQAGIEVILDVVFNHSAELDVFGPTLCQRGIDNASYYWLTSEGEYDNMTGCGNTLRLSQPYVMQWVLDCLRYWVDSCHIDGFRFDLGTVLGRSPAFDQHAPLFAALAADKQLCNCKMIAEPWDIGLGGYQLGNFPTGFSEWNDQYRDAMRRFWLRGDLPLGQFAQHFAASSNLFKHRERLPSASINQITAHDGFTLQDLLCFNQKHNQINGEENRDGSDNNLSNNFGSEGLVADDAIWQRRKACQRALLTTLLLSQGTPMLLAGDEHGHSQQGNNNAYCQNNILTWLDWGSADRELTAFTAELIRLRQQIPALIQDSWWEDGDGNVQWLDSQGEALSDGAWEQGCQKQLQIRLSQRWLVVINATDQACEMHLPVGEWVVIPPFEPSEHTEPLTVWNGSAHTVCVLTQKF</sequence>
<evidence type="ECO:0000255" key="1">
    <source>
        <dbReference type="HAMAP-Rule" id="MF_01248"/>
    </source>
</evidence>
<keyword id="KW-0119">Carbohydrate metabolism</keyword>
<keyword id="KW-0321">Glycogen metabolism</keyword>
<keyword id="KW-0326">Glycosidase</keyword>
<keyword id="KW-0378">Hydrolase</keyword>
<accession>A1JSI8</accession>
<name>GLGX_YERE8</name>